<dbReference type="EMBL" id="AE015929">
    <property type="protein sequence ID" value="AAO05300.1"/>
    <property type="molecule type" value="Genomic_DNA"/>
</dbReference>
<dbReference type="RefSeq" id="NP_765256.1">
    <property type="nucleotide sequence ID" value="NC_004461.1"/>
</dbReference>
<dbReference type="RefSeq" id="WP_001829942.1">
    <property type="nucleotide sequence ID" value="NZ_WBME01000021.1"/>
</dbReference>
<dbReference type="SMR" id="Q8CNJ6"/>
<dbReference type="GeneID" id="50018198"/>
<dbReference type="KEGG" id="sep:SE_1701"/>
<dbReference type="PATRIC" id="fig|176280.10.peg.1662"/>
<dbReference type="eggNOG" id="COG0224">
    <property type="taxonomic scope" value="Bacteria"/>
</dbReference>
<dbReference type="HOGENOM" id="CLU_050669_0_1_9"/>
<dbReference type="OrthoDB" id="9812769at2"/>
<dbReference type="Proteomes" id="UP000001411">
    <property type="component" value="Chromosome"/>
</dbReference>
<dbReference type="GO" id="GO:0005886">
    <property type="term" value="C:plasma membrane"/>
    <property type="evidence" value="ECO:0007669"/>
    <property type="project" value="UniProtKB-SubCell"/>
</dbReference>
<dbReference type="GO" id="GO:0045259">
    <property type="term" value="C:proton-transporting ATP synthase complex"/>
    <property type="evidence" value="ECO:0007669"/>
    <property type="project" value="UniProtKB-KW"/>
</dbReference>
<dbReference type="GO" id="GO:0005524">
    <property type="term" value="F:ATP binding"/>
    <property type="evidence" value="ECO:0007669"/>
    <property type="project" value="UniProtKB-UniRule"/>
</dbReference>
<dbReference type="GO" id="GO:0046933">
    <property type="term" value="F:proton-transporting ATP synthase activity, rotational mechanism"/>
    <property type="evidence" value="ECO:0007669"/>
    <property type="project" value="UniProtKB-UniRule"/>
</dbReference>
<dbReference type="GO" id="GO:0042777">
    <property type="term" value="P:proton motive force-driven plasma membrane ATP synthesis"/>
    <property type="evidence" value="ECO:0007669"/>
    <property type="project" value="UniProtKB-UniRule"/>
</dbReference>
<dbReference type="CDD" id="cd12151">
    <property type="entry name" value="F1-ATPase_gamma"/>
    <property type="match status" value="1"/>
</dbReference>
<dbReference type="FunFam" id="1.10.287.80:FF:000019">
    <property type="entry name" value="ATP synthase gamma chain"/>
    <property type="match status" value="1"/>
</dbReference>
<dbReference type="FunFam" id="3.40.1380.10:FF:000002">
    <property type="entry name" value="ATP synthase gamma chain"/>
    <property type="match status" value="1"/>
</dbReference>
<dbReference type="Gene3D" id="3.40.1380.10">
    <property type="match status" value="1"/>
</dbReference>
<dbReference type="Gene3D" id="1.10.287.80">
    <property type="entry name" value="ATP synthase, gamma subunit, helix hairpin domain"/>
    <property type="match status" value="1"/>
</dbReference>
<dbReference type="HAMAP" id="MF_00815">
    <property type="entry name" value="ATP_synth_gamma_bact"/>
    <property type="match status" value="1"/>
</dbReference>
<dbReference type="InterPro" id="IPR035968">
    <property type="entry name" value="ATP_synth_F1_ATPase_gsu"/>
</dbReference>
<dbReference type="InterPro" id="IPR000131">
    <property type="entry name" value="ATP_synth_F1_gsu"/>
</dbReference>
<dbReference type="NCBIfam" id="TIGR01146">
    <property type="entry name" value="ATPsyn_F1gamma"/>
    <property type="match status" value="1"/>
</dbReference>
<dbReference type="PANTHER" id="PTHR11693">
    <property type="entry name" value="ATP SYNTHASE GAMMA CHAIN"/>
    <property type="match status" value="1"/>
</dbReference>
<dbReference type="PANTHER" id="PTHR11693:SF22">
    <property type="entry name" value="ATP SYNTHASE SUBUNIT GAMMA, MITOCHONDRIAL"/>
    <property type="match status" value="1"/>
</dbReference>
<dbReference type="Pfam" id="PF00231">
    <property type="entry name" value="ATP-synt"/>
    <property type="match status" value="1"/>
</dbReference>
<dbReference type="PRINTS" id="PR00126">
    <property type="entry name" value="ATPASEGAMMA"/>
</dbReference>
<dbReference type="SUPFAM" id="SSF52943">
    <property type="entry name" value="ATP synthase (F1-ATPase), gamma subunit"/>
    <property type="match status" value="1"/>
</dbReference>
<evidence type="ECO:0000255" key="1">
    <source>
        <dbReference type="HAMAP-Rule" id="MF_00815"/>
    </source>
</evidence>
<proteinExistence type="inferred from homology"/>
<keyword id="KW-0066">ATP synthesis</keyword>
<keyword id="KW-1003">Cell membrane</keyword>
<keyword id="KW-0139">CF(1)</keyword>
<keyword id="KW-0375">Hydrogen ion transport</keyword>
<keyword id="KW-0406">Ion transport</keyword>
<keyword id="KW-0472">Membrane</keyword>
<keyword id="KW-0813">Transport</keyword>
<gene>
    <name evidence="1" type="primary">atpG</name>
    <name type="ordered locus">SE_1701</name>
</gene>
<organism>
    <name type="scientific">Staphylococcus epidermidis (strain ATCC 12228 / FDA PCI 1200)</name>
    <dbReference type="NCBI Taxonomy" id="176280"/>
    <lineage>
        <taxon>Bacteria</taxon>
        <taxon>Bacillati</taxon>
        <taxon>Bacillota</taxon>
        <taxon>Bacilli</taxon>
        <taxon>Bacillales</taxon>
        <taxon>Staphylococcaceae</taxon>
        <taxon>Staphylococcus</taxon>
    </lineage>
</organism>
<name>ATPG_STAES</name>
<reference key="1">
    <citation type="journal article" date="2003" name="Mol. Microbiol.">
        <title>Genome-based analysis of virulence genes in a non-biofilm-forming Staphylococcus epidermidis strain (ATCC 12228).</title>
        <authorList>
            <person name="Zhang Y.-Q."/>
            <person name="Ren S.-X."/>
            <person name="Li H.-L."/>
            <person name="Wang Y.-X."/>
            <person name="Fu G."/>
            <person name="Yang J."/>
            <person name="Qin Z.-Q."/>
            <person name="Miao Y.-G."/>
            <person name="Wang W.-Y."/>
            <person name="Chen R.-S."/>
            <person name="Shen Y."/>
            <person name="Chen Z."/>
            <person name="Yuan Z.-H."/>
            <person name="Zhao G.-P."/>
            <person name="Qu D."/>
            <person name="Danchin A."/>
            <person name="Wen Y.-M."/>
        </authorList>
    </citation>
    <scope>NUCLEOTIDE SEQUENCE [LARGE SCALE GENOMIC DNA]</scope>
    <source>
        <strain>ATCC 12228 / FDA PCI 1200</strain>
    </source>
</reference>
<feature type="chain" id="PRO_0000073379" description="ATP synthase gamma chain">
    <location>
        <begin position="1"/>
        <end position="288"/>
    </location>
</feature>
<accession>Q8CNJ6</accession>
<comment type="function">
    <text evidence="1">Produces ATP from ADP in the presence of a proton gradient across the membrane. The gamma chain is believed to be important in regulating ATPase activity and the flow of protons through the CF(0) complex.</text>
</comment>
<comment type="subunit">
    <text evidence="1">F-type ATPases have 2 components, CF(1) - the catalytic core - and CF(0) - the membrane proton channel. CF(1) has five subunits: alpha(3), beta(3), gamma(1), delta(1), epsilon(1). CF(0) has three main subunits: a, b and c.</text>
</comment>
<comment type="subcellular location">
    <subcellularLocation>
        <location evidence="1">Cell membrane</location>
        <topology evidence="1">Peripheral membrane protein</topology>
    </subcellularLocation>
</comment>
<comment type="similarity">
    <text evidence="1">Belongs to the ATPase gamma chain family.</text>
</comment>
<protein>
    <recommendedName>
        <fullName evidence="1">ATP synthase gamma chain</fullName>
    </recommendedName>
    <alternativeName>
        <fullName evidence="1">ATP synthase F1 sector gamma subunit</fullName>
    </alternativeName>
    <alternativeName>
        <fullName evidence="1">F-ATPase gamma subunit</fullName>
    </alternativeName>
</protein>
<sequence>MASLKEIDSRIKSTSKMKQITKAMNMVSSSKLRRAEKNTKSFRPYMEKMQDAITAVAGSNSTSNHPMLKSRDIKRSGYLVITSDKGLAGAYSTNVLKSLVNDINSKHNDSSEYSLIVLGQQGVDFFKHRGYEIESSLVEVPDQPSFKSIQSIAKHAIDLFSEENIDELTIYYSHYVSVLENKPATKQVLPLSQEDSGQGHGQMSSYEFEPDKESILSVILPQYVESLIYGTILDAKASEHASRMTAMRNASDNATELIDDLSLEYNRARQAAITQQITEIVGGSSALE</sequence>